<name>RS20_BACC2</name>
<organism>
    <name type="scientific">Bacillus cereus (strain G9842)</name>
    <dbReference type="NCBI Taxonomy" id="405531"/>
    <lineage>
        <taxon>Bacteria</taxon>
        <taxon>Bacillati</taxon>
        <taxon>Bacillota</taxon>
        <taxon>Bacilli</taxon>
        <taxon>Bacillales</taxon>
        <taxon>Bacillaceae</taxon>
        <taxon>Bacillus</taxon>
        <taxon>Bacillus cereus group</taxon>
    </lineage>
</organism>
<reference key="1">
    <citation type="submission" date="2008-10" db="EMBL/GenBank/DDBJ databases">
        <title>Genome sequence of Bacillus cereus G9842.</title>
        <authorList>
            <person name="Dodson R.J."/>
            <person name="Durkin A.S."/>
            <person name="Rosovitz M.J."/>
            <person name="Rasko D.A."/>
            <person name="Hoffmaster A."/>
            <person name="Ravel J."/>
            <person name="Sutton G."/>
        </authorList>
    </citation>
    <scope>NUCLEOTIDE SEQUENCE [LARGE SCALE GENOMIC DNA]</scope>
    <source>
        <strain>G9842</strain>
    </source>
</reference>
<protein>
    <recommendedName>
        <fullName evidence="1">Small ribosomal subunit protein bS20</fullName>
    </recommendedName>
    <alternativeName>
        <fullName evidence="3">30S ribosomal protein S20</fullName>
    </alternativeName>
</protein>
<gene>
    <name evidence="1" type="primary">rpsT</name>
    <name type="ordered locus">BCG9842_B0795</name>
</gene>
<keyword id="KW-0687">Ribonucleoprotein</keyword>
<keyword id="KW-0689">Ribosomal protein</keyword>
<keyword id="KW-0694">RNA-binding</keyword>
<keyword id="KW-0699">rRNA-binding</keyword>
<evidence type="ECO:0000255" key="1">
    <source>
        <dbReference type="HAMAP-Rule" id="MF_00500"/>
    </source>
</evidence>
<evidence type="ECO:0000256" key="2">
    <source>
        <dbReference type="SAM" id="MobiDB-lite"/>
    </source>
</evidence>
<evidence type="ECO:0000305" key="3"/>
<comment type="function">
    <text evidence="1">Binds directly to 16S ribosomal RNA.</text>
</comment>
<comment type="similarity">
    <text evidence="1">Belongs to the bacterial ribosomal protein bS20 family.</text>
</comment>
<feature type="chain" id="PRO_1000126398" description="Small ribosomal subunit protein bS20">
    <location>
        <begin position="1"/>
        <end position="85"/>
    </location>
</feature>
<feature type="region of interest" description="Disordered" evidence="2">
    <location>
        <begin position="1"/>
        <end position="25"/>
    </location>
</feature>
<feature type="region of interest" description="Disordered" evidence="2">
    <location>
        <begin position="62"/>
        <end position="85"/>
    </location>
</feature>
<sequence length="85" mass="9358">MANIKSAIKRAKLSEERRAHNASIKSDMRSAVKTVEALVTNNDLENAKEAFKTASKKLDKAARKGLIHQNAASRQKSRLAKQVNA</sequence>
<accession>B7IYH5</accession>
<proteinExistence type="inferred from homology"/>
<dbReference type="EMBL" id="CP001186">
    <property type="protein sequence ID" value="ACK97898.1"/>
    <property type="molecule type" value="Genomic_DNA"/>
</dbReference>
<dbReference type="RefSeq" id="WP_001274012.1">
    <property type="nucleotide sequence ID" value="NC_011772.1"/>
</dbReference>
<dbReference type="SMR" id="B7IYH5"/>
<dbReference type="GeneID" id="72451004"/>
<dbReference type="KEGG" id="bcg:BCG9842_B0795"/>
<dbReference type="HOGENOM" id="CLU_160655_1_0_9"/>
<dbReference type="Proteomes" id="UP000006744">
    <property type="component" value="Chromosome"/>
</dbReference>
<dbReference type="GO" id="GO:0005829">
    <property type="term" value="C:cytosol"/>
    <property type="evidence" value="ECO:0007669"/>
    <property type="project" value="TreeGrafter"/>
</dbReference>
<dbReference type="GO" id="GO:0015935">
    <property type="term" value="C:small ribosomal subunit"/>
    <property type="evidence" value="ECO:0007669"/>
    <property type="project" value="TreeGrafter"/>
</dbReference>
<dbReference type="GO" id="GO:0070181">
    <property type="term" value="F:small ribosomal subunit rRNA binding"/>
    <property type="evidence" value="ECO:0007669"/>
    <property type="project" value="TreeGrafter"/>
</dbReference>
<dbReference type="GO" id="GO:0003735">
    <property type="term" value="F:structural constituent of ribosome"/>
    <property type="evidence" value="ECO:0007669"/>
    <property type="project" value="InterPro"/>
</dbReference>
<dbReference type="GO" id="GO:0006412">
    <property type="term" value="P:translation"/>
    <property type="evidence" value="ECO:0007669"/>
    <property type="project" value="UniProtKB-UniRule"/>
</dbReference>
<dbReference type="FunFam" id="1.20.58.110:FF:000001">
    <property type="entry name" value="30S ribosomal protein S20"/>
    <property type="match status" value="1"/>
</dbReference>
<dbReference type="Gene3D" id="1.20.58.110">
    <property type="entry name" value="Ribosomal protein S20"/>
    <property type="match status" value="1"/>
</dbReference>
<dbReference type="HAMAP" id="MF_00500">
    <property type="entry name" value="Ribosomal_bS20"/>
    <property type="match status" value="1"/>
</dbReference>
<dbReference type="InterPro" id="IPR002583">
    <property type="entry name" value="Ribosomal_bS20"/>
</dbReference>
<dbReference type="InterPro" id="IPR036510">
    <property type="entry name" value="Ribosomal_bS20_sf"/>
</dbReference>
<dbReference type="NCBIfam" id="TIGR00029">
    <property type="entry name" value="S20"/>
    <property type="match status" value="1"/>
</dbReference>
<dbReference type="PANTHER" id="PTHR33398">
    <property type="entry name" value="30S RIBOSOMAL PROTEIN S20"/>
    <property type="match status" value="1"/>
</dbReference>
<dbReference type="PANTHER" id="PTHR33398:SF1">
    <property type="entry name" value="SMALL RIBOSOMAL SUBUNIT PROTEIN BS20C"/>
    <property type="match status" value="1"/>
</dbReference>
<dbReference type="Pfam" id="PF01649">
    <property type="entry name" value="Ribosomal_S20p"/>
    <property type="match status" value="1"/>
</dbReference>
<dbReference type="SUPFAM" id="SSF46992">
    <property type="entry name" value="Ribosomal protein S20"/>
    <property type="match status" value="1"/>
</dbReference>